<feature type="chain" id="PRO_0000176484" description="Asparagine--tRNA ligase">
    <location>
        <begin position="1"/>
        <end position="466"/>
    </location>
</feature>
<organism>
    <name type="scientific">Yersinia pseudotuberculosis serotype I (strain IP32953)</name>
    <dbReference type="NCBI Taxonomy" id="273123"/>
    <lineage>
        <taxon>Bacteria</taxon>
        <taxon>Pseudomonadati</taxon>
        <taxon>Pseudomonadota</taxon>
        <taxon>Gammaproteobacteria</taxon>
        <taxon>Enterobacterales</taxon>
        <taxon>Yersiniaceae</taxon>
        <taxon>Yersinia</taxon>
    </lineage>
</organism>
<evidence type="ECO:0000255" key="1">
    <source>
        <dbReference type="HAMAP-Rule" id="MF_00534"/>
    </source>
</evidence>
<reference key="1">
    <citation type="journal article" date="2004" name="Proc. Natl. Acad. Sci. U.S.A.">
        <title>Insights into the evolution of Yersinia pestis through whole-genome comparison with Yersinia pseudotuberculosis.</title>
        <authorList>
            <person name="Chain P.S.G."/>
            <person name="Carniel E."/>
            <person name="Larimer F.W."/>
            <person name="Lamerdin J."/>
            <person name="Stoutland P.O."/>
            <person name="Regala W.M."/>
            <person name="Georgescu A.M."/>
            <person name="Vergez L.M."/>
            <person name="Land M.L."/>
            <person name="Motin V.L."/>
            <person name="Brubaker R.R."/>
            <person name="Fowler J."/>
            <person name="Hinnebusch J."/>
            <person name="Marceau M."/>
            <person name="Medigue C."/>
            <person name="Simonet M."/>
            <person name="Chenal-Francisque V."/>
            <person name="Souza B."/>
            <person name="Dacheux D."/>
            <person name="Elliott J.M."/>
            <person name="Derbise A."/>
            <person name="Hauser L.J."/>
            <person name="Garcia E."/>
        </authorList>
    </citation>
    <scope>NUCLEOTIDE SEQUENCE [LARGE SCALE GENOMIC DNA]</scope>
    <source>
        <strain>IP32953</strain>
    </source>
</reference>
<protein>
    <recommendedName>
        <fullName evidence="1">Asparagine--tRNA ligase</fullName>
        <ecNumber evidence="1">6.1.1.22</ecNumber>
    </recommendedName>
    <alternativeName>
        <fullName evidence="1">Asparaginyl-tRNA synthetase</fullName>
        <shortName evidence="1">AsnRS</shortName>
    </alternativeName>
</protein>
<keyword id="KW-0030">Aminoacyl-tRNA synthetase</keyword>
<keyword id="KW-0067">ATP-binding</keyword>
<keyword id="KW-0963">Cytoplasm</keyword>
<keyword id="KW-0436">Ligase</keyword>
<keyword id="KW-0547">Nucleotide-binding</keyword>
<keyword id="KW-0648">Protein biosynthesis</keyword>
<sequence length="466" mass="52074">MSVVPVVDVLQGRAAVGSEVTVRGWVRTRRDSKAGISFVAVYDGSCFDPLQAVVNNTLPNYQDEVLHLTTGCSVEVTGTVVASPGEGQSFEIQATAINVVGWVDDPDTYPMAAKRHSIEYLREVAHLRPRTNLIGAVARVRHTLAQAIHRFFDENGYFWVSTPLITASDTEGAGEMFRVSTLDLENLPRTDTGAVDFSEDFFGKEAFLTVSGQLNGETYACALSKVYTFGPTFRAENSNTSRHLAEFWMVEPEVAFASLDDVAGLAEKMLKYVFQAVLNERADDMKFFAERVDKDAVDRLQRFVTSDFAQVDYTDAIEILLASGQKFENDVSWGIDLSSEHERYLAEKHFKAPVVVKNYPKDIKAFYMRMNEDGKTVAAMDVLAPGIGEIIGGSQREERLDVLDARLAEMGLNKEDYWWYRDLRRYGTVPHSGFGLGFERLISYVTGVQNVRDVIPFPRTPRNASF</sequence>
<dbReference type="EC" id="6.1.1.22" evidence="1"/>
<dbReference type="EMBL" id="BX936398">
    <property type="protein sequence ID" value="CAH20676.1"/>
    <property type="molecule type" value="Genomic_DNA"/>
</dbReference>
<dbReference type="RefSeq" id="WP_002211301.1">
    <property type="nucleotide sequence ID" value="NZ_CP009712.1"/>
</dbReference>
<dbReference type="SMR" id="Q66CG7"/>
<dbReference type="GeneID" id="96665013"/>
<dbReference type="KEGG" id="ypo:BZ17_1081"/>
<dbReference type="KEGG" id="yps:YPTB1436"/>
<dbReference type="PATRIC" id="fig|273123.14.peg.1147"/>
<dbReference type="Proteomes" id="UP000001011">
    <property type="component" value="Chromosome"/>
</dbReference>
<dbReference type="GO" id="GO:0005737">
    <property type="term" value="C:cytoplasm"/>
    <property type="evidence" value="ECO:0007669"/>
    <property type="project" value="UniProtKB-SubCell"/>
</dbReference>
<dbReference type="GO" id="GO:0004816">
    <property type="term" value="F:asparagine-tRNA ligase activity"/>
    <property type="evidence" value="ECO:0007669"/>
    <property type="project" value="UniProtKB-UniRule"/>
</dbReference>
<dbReference type="GO" id="GO:0005524">
    <property type="term" value="F:ATP binding"/>
    <property type="evidence" value="ECO:0007669"/>
    <property type="project" value="UniProtKB-UniRule"/>
</dbReference>
<dbReference type="GO" id="GO:0003676">
    <property type="term" value="F:nucleic acid binding"/>
    <property type="evidence" value="ECO:0007669"/>
    <property type="project" value="InterPro"/>
</dbReference>
<dbReference type="GO" id="GO:0006421">
    <property type="term" value="P:asparaginyl-tRNA aminoacylation"/>
    <property type="evidence" value="ECO:0007669"/>
    <property type="project" value="UniProtKB-UniRule"/>
</dbReference>
<dbReference type="CDD" id="cd00776">
    <property type="entry name" value="AsxRS_core"/>
    <property type="match status" value="1"/>
</dbReference>
<dbReference type="CDD" id="cd04318">
    <property type="entry name" value="EcAsnRS_like_N"/>
    <property type="match status" value="1"/>
</dbReference>
<dbReference type="FunFam" id="3.30.930.10:FF:000016">
    <property type="entry name" value="Asparagine--tRNA ligase"/>
    <property type="match status" value="1"/>
</dbReference>
<dbReference type="Gene3D" id="3.30.930.10">
    <property type="entry name" value="Bira Bifunctional Protein, Domain 2"/>
    <property type="match status" value="1"/>
</dbReference>
<dbReference type="Gene3D" id="2.40.50.140">
    <property type="entry name" value="Nucleic acid-binding proteins"/>
    <property type="match status" value="1"/>
</dbReference>
<dbReference type="HAMAP" id="MF_00534">
    <property type="entry name" value="Asn_tRNA_synth"/>
    <property type="match status" value="1"/>
</dbReference>
<dbReference type="InterPro" id="IPR004364">
    <property type="entry name" value="Aa-tRNA-synt_II"/>
</dbReference>
<dbReference type="InterPro" id="IPR006195">
    <property type="entry name" value="aa-tRNA-synth_II"/>
</dbReference>
<dbReference type="InterPro" id="IPR045864">
    <property type="entry name" value="aa-tRNA-synth_II/BPL/LPL"/>
</dbReference>
<dbReference type="InterPro" id="IPR004522">
    <property type="entry name" value="Asn-tRNA-ligase"/>
</dbReference>
<dbReference type="InterPro" id="IPR002312">
    <property type="entry name" value="Asp/Asn-tRNA-synth_IIb"/>
</dbReference>
<dbReference type="InterPro" id="IPR012340">
    <property type="entry name" value="NA-bd_OB-fold"/>
</dbReference>
<dbReference type="InterPro" id="IPR004365">
    <property type="entry name" value="NA-bd_OB_tRNA"/>
</dbReference>
<dbReference type="NCBIfam" id="TIGR00457">
    <property type="entry name" value="asnS"/>
    <property type="match status" value="1"/>
</dbReference>
<dbReference type="NCBIfam" id="NF003037">
    <property type="entry name" value="PRK03932.1"/>
    <property type="match status" value="1"/>
</dbReference>
<dbReference type="PANTHER" id="PTHR22594:SF34">
    <property type="entry name" value="ASPARAGINE--TRNA LIGASE, MITOCHONDRIAL-RELATED"/>
    <property type="match status" value="1"/>
</dbReference>
<dbReference type="PANTHER" id="PTHR22594">
    <property type="entry name" value="ASPARTYL/LYSYL-TRNA SYNTHETASE"/>
    <property type="match status" value="1"/>
</dbReference>
<dbReference type="Pfam" id="PF00152">
    <property type="entry name" value="tRNA-synt_2"/>
    <property type="match status" value="1"/>
</dbReference>
<dbReference type="Pfam" id="PF01336">
    <property type="entry name" value="tRNA_anti-codon"/>
    <property type="match status" value="1"/>
</dbReference>
<dbReference type="PRINTS" id="PR01042">
    <property type="entry name" value="TRNASYNTHASP"/>
</dbReference>
<dbReference type="SUPFAM" id="SSF55681">
    <property type="entry name" value="Class II aaRS and biotin synthetases"/>
    <property type="match status" value="1"/>
</dbReference>
<dbReference type="SUPFAM" id="SSF50249">
    <property type="entry name" value="Nucleic acid-binding proteins"/>
    <property type="match status" value="1"/>
</dbReference>
<dbReference type="PROSITE" id="PS50862">
    <property type="entry name" value="AA_TRNA_LIGASE_II"/>
    <property type="match status" value="1"/>
</dbReference>
<proteinExistence type="inferred from homology"/>
<name>SYN_YERPS</name>
<comment type="catalytic activity">
    <reaction evidence="1">
        <text>tRNA(Asn) + L-asparagine + ATP = L-asparaginyl-tRNA(Asn) + AMP + diphosphate + H(+)</text>
        <dbReference type="Rhea" id="RHEA:11180"/>
        <dbReference type="Rhea" id="RHEA-COMP:9659"/>
        <dbReference type="Rhea" id="RHEA-COMP:9674"/>
        <dbReference type="ChEBI" id="CHEBI:15378"/>
        <dbReference type="ChEBI" id="CHEBI:30616"/>
        <dbReference type="ChEBI" id="CHEBI:33019"/>
        <dbReference type="ChEBI" id="CHEBI:58048"/>
        <dbReference type="ChEBI" id="CHEBI:78442"/>
        <dbReference type="ChEBI" id="CHEBI:78515"/>
        <dbReference type="ChEBI" id="CHEBI:456215"/>
        <dbReference type="EC" id="6.1.1.22"/>
    </reaction>
</comment>
<comment type="subunit">
    <text evidence="1">Homodimer.</text>
</comment>
<comment type="subcellular location">
    <subcellularLocation>
        <location>Cytoplasm</location>
    </subcellularLocation>
</comment>
<comment type="similarity">
    <text evidence="1">Belongs to the class-II aminoacyl-tRNA synthetase family.</text>
</comment>
<accession>Q66CG7</accession>
<gene>
    <name evidence="1" type="primary">asnS</name>
    <name type="ordered locus">YPTB1436</name>
</gene>